<proteinExistence type="inferred from homology"/>
<dbReference type="EMBL" id="AE005674">
    <property type="protein sequence ID" value="AAN44784.1"/>
    <property type="molecule type" value="Genomic_DNA"/>
</dbReference>
<dbReference type="EMBL" id="AE014073">
    <property type="protein sequence ID" value="AAP18593.1"/>
    <property type="molecule type" value="Genomic_DNA"/>
</dbReference>
<dbReference type="RefSeq" id="NP_709077.1">
    <property type="nucleotide sequence ID" value="NC_004337.2"/>
</dbReference>
<dbReference type="RefSeq" id="WP_000691382.1">
    <property type="nucleotide sequence ID" value="NZ_WPGW01000137.1"/>
</dbReference>
<dbReference type="SMR" id="P0AGJ1"/>
<dbReference type="STRING" id="198214.SF3321"/>
<dbReference type="PaxDb" id="198214-SF3321"/>
<dbReference type="GeneID" id="1027048"/>
<dbReference type="GeneID" id="93778698"/>
<dbReference type="KEGG" id="sfl:SF3321"/>
<dbReference type="KEGG" id="sfx:S3546"/>
<dbReference type="PATRIC" id="fig|198214.7.peg.3930"/>
<dbReference type="HOGENOM" id="CLU_046525_0_2_6"/>
<dbReference type="Proteomes" id="UP000001006">
    <property type="component" value="Chromosome"/>
</dbReference>
<dbReference type="Proteomes" id="UP000002673">
    <property type="component" value="Chromosome"/>
</dbReference>
<dbReference type="GO" id="GO:0005886">
    <property type="term" value="C:plasma membrane"/>
    <property type="evidence" value="ECO:0007669"/>
    <property type="project" value="UniProtKB-SubCell"/>
</dbReference>
<dbReference type="GO" id="GO:0015079">
    <property type="term" value="F:potassium ion transmembrane transporter activity"/>
    <property type="evidence" value="ECO:0007669"/>
    <property type="project" value="InterPro"/>
</dbReference>
<dbReference type="FunFam" id="3.30.70.1450:FF:000001">
    <property type="entry name" value="Trk system potassium transporter TrkA"/>
    <property type="match status" value="1"/>
</dbReference>
<dbReference type="FunFam" id="3.30.70.1450:FF:000002">
    <property type="entry name" value="Trk system potassium transporter TrkA"/>
    <property type="match status" value="1"/>
</dbReference>
<dbReference type="FunFam" id="3.40.50.720:FF:000027">
    <property type="entry name" value="Trk system potassium transporter TrkA"/>
    <property type="match status" value="1"/>
</dbReference>
<dbReference type="FunFam" id="3.40.50.720:FF:000042">
    <property type="entry name" value="Trk system potassium transporter TrkA"/>
    <property type="match status" value="1"/>
</dbReference>
<dbReference type="Gene3D" id="3.40.50.720">
    <property type="entry name" value="NAD(P)-binding Rossmann-like Domain"/>
    <property type="match status" value="2"/>
</dbReference>
<dbReference type="Gene3D" id="3.30.70.1450">
    <property type="entry name" value="Regulator of K+ conductance, C-terminal domain"/>
    <property type="match status" value="2"/>
</dbReference>
<dbReference type="InterPro" id="IPR006036">
    <property type="entry name" value="K_uptake_TrkA"/>
</dbReference>
<dbReference type="InterPro" id="IPR036291">
    <property type="entry name" value="NAD(P)-bd_dom_sf"/>
</dbReference>
<dbReference type="InterPro" id="IPR006037">
    <property type="entry name" value="RCK_C"/>
</dbReference>
<dbReference type="InterPro" id="IPR036721">
    <property type="entry name" value="RCK_C_sf"/>
</dbReference>
<dbReference type="InterPro" id="IPR003148">
    <property type="entry name" value="RCK_N"/>
</dbReference>
<dbReference type="InterPro" id="IPR050721">
    <property type="entry name" value="Trk_Ktr_HKT_K-transport"/>
</dbReference>
<dbReference type="NCBIfam" id="NF007030">
    <property type="entry name" value="PRK09496.1-1"/>
    <property type="match status" value="1"/>
</dbReference>
<dbReference type="NCBIfam" id="NF007031">
    <property type="entry name" value="PRK09496.1-2"/>
    <property type="match status" value="1"/>
</dbReference>
<dbReference type="NCBIfam" id="NF007032">
    <property type="entry name" value="PRK09496.1-4"/>
    <property type="match status" value="1"/>
</dbReference>
<dbReference type="NCBIfam" id="NF007039">
    <property type="entry name" value="PRK09496.3-2"/>
    <property type="match status" value="1"/>
</dbReference>
<dbReference type="PANTHER" id="PTHR43833">
    <property type="entry name" value="POTASSIUM CHANNEL PROTEIN 2-RELATED-RELATED"/>
    <property type="match status" value="1"/>
</dbReference>
<dbReference type="PANTHER" id="PTHR43833:SF5">
    <property type="entry name" value="TRK SYSTEM POTASSIUM UPTAKE PROTEIN TRKA"/>
    <property type="match status" value="1"/>
</dbReference>
<dbReference type="Pfam" id="PF02080">
    <property type="entry name" value="TrkA_C"/>
    <property type="match status" value="2"/>
</dbReference>
<dbReference type="Pfam" id="PF02254">
    <property type="entry name" value="TrkA_N"/>
    <property type="match status" value="2"/>
</dbReference>
<dbReference type="PRINTS" id="PR00335">
    <property type="entry name" value="KUPTAKETRKA"/>
</dbReference>
<dbReference type="SUPFAM" id="SSF51735">
    <property type="entry name" value="NAD(P)-binding Rossmann-fold domains"/>
    <property type="match status" value="2"/>
</dbReference>
<dbReference type="SUPFAM" id="SSF116726">
    <property type="entry name" value="TrkA C-terminal domain-like"/>
    <property type="match status" value="2"/>
</dbReference>
<dbReference type="PROSITE" id="PS51202">
    <property type="entry name" value="RCK_C"/>
    <property type="match status" value="2"/>
</dbReference>
<dbReference type="PROSITE" id="PS51201">
    <property type="entry name" value="RCK_N"/>
    <property type="match status" value="2"/>
</dbReference>
<feature type="chain" id="PRO_0000148718" description="Trk system potassium uptake protein TrkA">
    <location>
        <begin position="1"/>
        <end position="458"/>
    </location>
</feature>
<feature type="domain" description="RCK N-terminal 1" evidence="3">
    <location>
        <begin position="1"/>
        <end position="123"/>
    </location>
</feature>
<feature type="domain" description="RCK C-terminal 1" evidence="4">
    <location>
        <begin position="143"/>
        <end position="227"/>
    </location>
</feature>
<feature type="domain" description="RCK N-terminal 2" evidence="3">
    <location>
        <begin position="232"/>
        <end position="348"/>
    </location>
</feature>
<feature type="domain" description="RCK C-terminal 2" evidence="4">
    <location>
        <begin position="368"/>
        <end position="453"/>
    </location>
</feature>
<feature type="binding site" description="in other chain" evidence="1">
    <location>
        <begin position="7"/>
        <end position="11"/>
    </location>
    <ligand>
        <name>NAD(+)</name>
        <dbReference type="ChEBI" id="CHEBI:57540"/>
        <label>1</label>
        <note>ligand shared between dimeric partners</note>
    </ligand>
</feature>
<feature type="binding site" description="in other chain" evidence="1">
    <location>
        <position position="30"/>
    </location>
    <ligand>
        <name>NAD(+)</name>
        <dbReference type="ChEBI" id="CHEBI:57540"/>
        <label>1</label>
        <note>ligand shared between dimeric partners</note>
    </ligand>
</feature>
<feature type="binding site" description="in other chain" evidence="1">
    <location>
        <begin position="73"/>
        <end position="74"/>
    </location>
    <ligand>
        <name>NAD(+)</name>
        <dbReference type="ChEBI" id="CHEBI:57540"/>
        <label>1</label>
        <note>ligand shared between dimeric partners</note>
    </ligand>
</feature>
<feature type="binding site" evidence="1">
    <location>
        <position position="98"/>
    </location>
    <ligand>
        <name>NAD(+)</name>
        <dbReference type="ChEBI" id="CHEBI:57540"/>
        <label>1</label>
        <note>ligand shared between dimeric partners</note>
    </ligand>
</feature>
<feature type="binding site" evidence="2">
    <location>
        <begin position="234"/>
        <end position="262"/>
    </location>
    <ligand>
        <name>NAD(+)</name>
        <dbReference type="ChEBI" id="CHEBI:57540"/>
        <label>2</label>
    </ligand>
</feature>
<keyword id="KW-0997">Cell inner membrane</keyword>
<keyword id="KW-1003">Cell membrane</keyword>
<keyword id="KW-0406">Ion transport</keyword>
<keyword id="KW-0472">Membrane</keyword>
<keyword id="KW-0520">NAD</keyword>
<keyword id="KW-0630">Potassium</keyword>
<keyword id="KW-0633">Potassium transport</keyword>
<keyword id="KW-1185">Reference proteome</keyword>
<keyword id="KW-0677">Repeat</keyword>
<keyword id="KW-0813">Transport</keyword>
<accession>P0AGJ1</accession>
<accession>P23868</accession>
<accession>P77041</accession>
<name>TRKA_SHIFL</name>
<gene>
    <name type="primary">trkA</name>
    <name type="ordered locus">SF3321</name>
    <name type="ordered locus">S3546</name>
</gene>
<protein>
    <recommendedName>
        <fullName>Trk system potassium uptake protein TrkA</fullName>
        <shortName>K(+)-uptake protein TrkA</shortName>
    </recommendedName>
</protein>
<organism>
    <name type="scientific">Shigella flexneri</name>
    <dbReference type="NCBI Taxonomy" id="623"/>
    <lineage>
        <taxon>Bacteria</taxon>
        <taxon>Pseudomonadati</taxon>
        <taxon>Pseudomonadota</taxon>
        <taxon>Gammaproteobacteria</taxon>
        <taxon>Enterobacterales</taxon>
        <taxon>Enterobacteriaceae</taxon>
        <taxon>Shigella</taxon>
    </lineage>
</organism>
<sequence length="458" mass="50368">MKIIILGAGQVGGTLAENLVGENNDITVVDTNGERLRTLQDKFDLRVVQGHGSHPRVLREAGADDADMLVAVTSSDETNMVACQVAYSLFNTPNRIARIRSPDYVRDADKLFHSDAVPIDHLIAPEQLVIDNIYRLIEYPGALQVVNFAEGKVSLAVVKAYYGGPLIGNALSTMREHMPHIDTRVAAIFRHDRPIRPQGSTIVEAGDEVFFIAASQHIRAVMSELQRLEKPYKRIMLVGGGNIGAGLARRLEKDYSVKLIERNQQRAAELAEKLQNTIVFFGDASDQELLAEEHIDQVDLFIAVTNDDEANIMSAMLAKRMGAKKVMVLIQRRAYVDLVQGSVIDIAISPQQATISALLSHVRKADIVGVSSLRRGVAEAIEAVAHGDESTSRVVGRVIDEIKLPPGTIIGAVVRGNDVMIANDNLRIEQGDHVIMFLTDKKFITDVERLFQPSPFFL</sequence>
<comment type="function">
    <text evidence="1">Part of the constitutive potassium transport systems TrkG and TrkH. May regulate the transport activity of TrkG and TrkH systems. Binds to NAD(+) and NADH (By similarity).</text>
</comment>
<comment type="subcellular location">
    <subcellularLocation>
        <location evidence="1">Cell inner membrane</location>
        <topology evidence="1">Peripheral membrane protein</topology>
        <orientation evidence="1">Cytoplasmic side</orientation>
    </subcellularLocation>
    <text evidence="1">Peripherally bound to the inner side of the inner membrane via the TrkG and TrkH proteins.</text>
</comment>
<comment type="domain">
    <text evidence="1">The RCK N-terminal domain binds NAD and possibly other effectors. This is expected to cause a conformation change that regulates potassium transport (By similarity).</text>
</comment>
<reference key="1">
    <citation type="journal article" date="2002" name="Nucleic Acids Res.">
        <title>Genome sequence of Shigella flexneri 2a: insights into pathogenicity through comparison with genomes of Escherichia coli K12 and O157.</title>
        <authorList>
            <person name="Jin Q."/>
            <person name="Yuan Z."/>
            <person name="Xu J."/>
            <person name="Wang Y."/>
            <person name="Shen Y."/>
            <person name="Lu W."/>
            <person name="Wang J."/>
            <person name="Liu H."/>
            <person name="Yang J."/>
            <person name="Yang F."/>
            <person name="Zhang X."/>
            <person name="Zhang J."/>
            <person name="Yang G."/>
            <person name="Wu H."/>
            <person name="Qu D."/>
            <person name="Dong J."/>
            <person name="Sun L."/>
            <person name="Xue Y."/>
            <person name="Zhao A."/>
            <person name="Gao Y."/>
            <person name="Zhu J."/>
            <person name="Kan B."/>
            <person name="Ding K."/>
            <person name="Chen S."/>
            <person name="Cheng H."/>
            <person name="Yao Z."/>
            <person name="He B."/>
            <person name="Chen R."/>
            <person name="Ma D."/>
            <person name="Qiang B."/>
            <person name="Wen Y."/>
            <person name="Hou Y."/>
            <person name="Yu J."/>
        </authorList>
    </citation>
    <scope>NUCLEOTIDE SEQUENCE [LARGE SCALE GENOMIC DNA]</scope>
    <source>
        <strain>301 / Serotype 2a</strain>
    </source>
</reference>
<reference key="2">
    <citation type="journal article" date="2003" name="Infect. Immun.">
        <title>Complete genome sequence and comparative genomics of Shigella flexneri serotype 2a strain 2457T.</title>
        <authorList>
            <person name="Wei J."/>
            <person name="Goldberg M.B."/>
            <person name="Burland V."/>
            <person name="Venkatesan M.M."/>
            <person name="Deng W."/>
            <person name="Fournier G."/>
            <person name="Mayhew G.F."/>
            <person name="Plunkett G. III"/>
            <person name="Rose D.J."/>
            <person name="Darling A."/>
            <person name="Mau B."/>
            <person name="Perna N.T."/>
            <person name="Payne S.M."/>
            <person name="Runyen-Janecky L.J."/>
            <person name="Zhou S."/>
            <person name="Schwartz D.C."/>
            <person name="Blattner F.R."/>
        </authorList>
    </citation>
    <scope>NUCLEOTIDE SEQUENCE [LARGE SCALE GENOMIC DNA]</scope>
    <source>
        <strain>ATCC 700930 / 2457T / Serotype 2a</strain>
    </source>
</reference>
<evidence type="ECO:0000250" key="1"/>
<evidence type="ECO:0000255" key="2"/>
<evidence type="ECO:0000255" key="3">
    <source>
        <dbReference type="PROSITE-ProRule" id="PRU00543"/>
    </source>
</evidence>
<evidence type="ECO:0000255" key="4">
    <source>
        <dbReference type="PROSITE-ProRule" id="PRU00544"/>
    </source>
</evidence>